<feature type="chain" id="PRO_0000322740" description="LexA repressor">
    <location>
        <begin position="1"/>
        <end position="206"/>
    </location>
</feature>
<feature type="DNA-binding region" description="H-T-H motif" evidence="1">
    <location>
        <begin position="28"/>
        <end position="48"/>
    </location>
</feature>
<feature type="active site" description="For autocatalytic cleavage activity" evidence="1">
    <location>
        <position position="128"/>
    </location>
</feature>
<feature type="active site" description="For autocatalytic cleavage activity" evidence="1">
    <location>
        <position position="166"/>
    </location>
</feature>
<feature type="site" description="Cleavage; by autolysis" evidence="1">
    <location>
        <begin position="93"/>
        <end position="94"/>
    </location>
</feature>
<evidence type="ECO:0000255" key="1">
    <source>
        <dbReference type="HAMAP-Rule" id="MF_00015"/>
    </source>
</evidence>
<proteinExistence type="inferred from homology"/>
<keyword id="KW-0068">Autocatalytic cleavage</keyword>
<keyword id="KW-0227">DNA damage</keyword>
<keyword id="KW-0234">DNA repair</keyword>
<keyword id="KW-0235">DNA replication</keyword>
<keyword id="KW-0238">DNA-binding</keyword>
<keyword id="KW-0378">Hydrolase</keyword>
<keyword id="KW-1185">Reference proteome</keyword>
<keyword id="KW-0678">Repressor</keyword>
<keyword id="KW-0742">SOS response</keyword>
<keyword id="KW-0804">Transcription</keyword>
<keyword id="KW-0805">Transcription regulation</keyword>
<organism>
    <name type="scientific">Ligilactobacillus salivarius (strain UCC118)</name>
    <name type="common">Lactobacillus salivarius</name>
    <dbReference type="NCBI Taxonomy" id="362948"/>
    <lineage>
        <taxon>Bacteria</taxon>
        <taxon>Bacillati</taxon>
        <taxon>Bacillota</taxon>
        <taxon>Bacilli</taxon>
        <taxon>Lactobacillales</taxon>
        <taxon>Lactobacillaceae</taxon>
        <taxon>Ligilactobacillus</taxon>
    </lineage>
</organism>
<name>LEXA_LIGS1</name>
<reference key="1">
    <citation type="journal article" date="2006" name="Proc. Natl. Acad. Sci. U.S.A.">
        <title>Multireplicon genome architecture of Lactobacillus salivarius.</title>
        <authorList>
            <person name="Claesson M.J."/>
            <person name="Li Y."/>
            <person name="Leahy S."/>
            <person name="Canchaya C."/>
            <person name="van Pijkeren J.P."/>
            <person name="Cerdeno-Tarraga A.M."/>
            <person name="Parkhill J."/>
            <person name="Flynn S."/>
            <person name="O'Sullivan G.C."/>
            <person name="Collins J.K."/>
            <person name="Higgins D."/>
            <person name="Shanahan F."/>
            <person name="Fitzgerald G.F."/>
            <person name="van Sinderen D."/>
            <person name="O'Toole P.W."/>
        </authorList>
    </citation>
    <scope>NUCLEOTIDE SEQUENCE [LARGE SCALE GENOMIC DNA]</scope>
    <source>
        <strain>UCC118</strain>
    </source>
</reference>
<accession>Q1WUI6</accession>
<sequence length="206" mass="22998">MTKSEKRQHDILRYIFSHVSDSGYPPTVREICNAVGLSSTSTVHGHLSKLESKGLIKRDPTKPRAIEITLAGLEMLDELPNKTQIPIVGTVTAGEPILAVEENRDYFPLPPYFESADDLFMLSIRGESMINAGILDGDQVIVRKQSSANNGEIVIAMTEENEATCKRFFKEDGYYRLQPENDTMDPIILENVTILGKVVGLYRDLI</sequence>
<comment type="function">
    <text evidence="1">Represses a number of genes involved in the response to DNA damage (SOS response), including recA and lexA. In the presence of single-stranded DNA, RecA interacts with LexA causing an autocatalytic cleavage which disrupts the DNA-binding part of LexA, leading to derepression of the SOS regulon and eventually DNA repair.</text>
</comment>
<comment type="catalytic activity">
    <reaction evidence="1">
        <text>Hydrolysis of Ala-|-Gly bond in repressor LexA.</text>
        <dbReference type="EC" id="3.4.21.88"/>
    </reaction>
</comment>
<comment type="subunit">
    <text evidence="1">Homodimer.</text>
</comment>
<comment type="similarity">
    <text evidence="1">Belongs to the peptidase S24 family.</text>
</comment>
<protein>
    <recommendedName>
        <fullName evidence="1">LexA repressor</fullName>
        <ecNumber evidence="1">3.4.21.88</ecNumber>
    </recommendedName>
</protein>
<dbReference type="EC" id="3.4.21.88" evidence="1"/>
<dbReference type="EMBL" id="CP000233">
    <property type="protein sequence ID" value="ABD99349.1"/>
    <property type="molecule type" value="Genomic_DNA"/>
</dbReference>
<dbReference type="RefSeq" id="WP_003699857.1">
    <property type="nucleotide sequence ID" value="NC_007929.1"/>
</dbReference>
<dbReference type="RefSeq" id="YP_535432.1">
    <property type="nucleotide sequence ID" value="NC_007929.1"/>
</dbReference>
<dbReference type="SMR" id="Q1WUI6"/>
<dbReference type="STRING" id="362948.LSL_0540"/>
<dbReference type="MEROPS" id="S24.001"/>
<dbReference type="GeneID" id="89465326"/>
<dbReference type="KEGG" id="lsl:LSL_0540"/>
<dbReference type="PATRIC" id="fig|362948.14.peg.618"/>
<dbReference type="HOGENOM" id="CLU_066192_45_1_9"/>
<dbReference type="OrthoDB" id="9802364at2"/>
<dbReference type="Proteomes" id="UP000006559">
    <property type="component" value="Chromosome"/>
</dbReference>
<dbReference type="GO" id="GO:0003677">
    <property type="term" value="F:DNA binding"/>
    <property type="evidence" value="ECO:0007669"/>
    <property type="project" value="UniProtKB-UniRule"/>
</dbReference>
<dbReference type="GO" id="GO:0004252">
    <property type="term" value="F:serine-type endopeptidase activity"/>
    <property type="evidence" value="ECO:0007669"/>
    <property type="project" value="UniProtKB-UniRule"/>
</dbReference>
<dbReference type="GO" id="GO:0006281">
    <property type="term" value="P:DNA repair"/>
    <property type="evidence" value="ECO:0007669"/>
    <property type="project" value="UniProtKB-UniRule"/>
</dbReference>
<dbReference type="GO" id="GO:0006260">
    <property type="term" value="P:DNA replication"/>
    <property type="evidence" value="ECO:0007669"/>
    <property type="project" value="UniProtKB-UniRule"/>
</dbReference>
<dbReference type="GO" id="GO:0045892">
    <property type="term" value="P:negative regulation of DNA-templated transcription"/>
    <property type="evidence" value="ECO:0007669"/>
    <property type="project" value="UniProtKB-UniRule"/>
</dbReference>
<dbReference type="GO" id="GO:0006508">
    <property type="term" value="P:proteolysis"/>
    <property type="evidence" value="ECO:0007669"/>
    <property type="project" value="InterPro"/>
</dbReference>
<dbReference type="GO" id="GO:0009432">
    <property type="term" value="P:SOS response"/>
    <property type="evidence" value="ECO:0007669"/>
    <property type="project" value="UniProtKB-UniRule"/>
</dbReference>
<dbReference type="CDD" id="cd00090">
    <property type="entry name" value="HTH_ARSR"/>
    <property type="match status" value="1"/>
</dbReference>
<dbReference type="CDD" id="cd06529">
    <property type="entry name" value="S24_LexA-like"/>
    <property type="match status" value="1"/>
</dbReference>
<dbReference type="FunFam" id="1.10.10.10:FF:000009">
    <property type="entry name" value="LexA repressor"/>
    <property type="match status" value="1"/>
</dbReference>
<dbReference type="FunFam" id="2.10.109.10:FF:000001">
    <property type="entry name" value="LexA repressor"/>
    <property type="match status" value="1"/>
</dbReference>
<dbReference type="Gene3D" id="2.10.109.10">
    <property type="entry name" value="Umud Fragment, subunit A"/>
    <property type="match status" value="1"/>
</dbReference>
<dbReference type="Gene3D" id="1.10.10.10">
    <property type="entry name" value="Winged helix-like DNA-binding domain superfamily/Winged helix DNA-binding domain"/>
    <property type="match status" value="1"/>
</dbReference>
<dbReference type="HAMAP" id="MF_00015">
    <property type="entry name" value="LexA"/>
    <property type="match status" value="1"/>
</dbReference>
<dbReference type="InterPro" id="IPR011991">
    <property type="entry name" value="ArsR-like_HTH"/>
</dbReference>
<dbReference type="InterPro" id="IPR006200">
    <property type="entry name" value="LexA"/>
</dbReference>
<dbReference type="InterPro" id="IPR039418">
    <property type="entry name" value="LexA-like"/>
</dbReference>
<dbReference type="InterPro" id="IPR036286">
    <property type="entry name" value="LexA/Signal_pep-like_sf"/>
</dbReference>
<dbReference type="InterPro" id="IPR006199">
    <property type="entry name" value="LexA_DNA-bd_dom"/>
</dbReference>
<dbReference type="InterPro" id="IPR050077">
    <property type="entry name" value="LexA_repressor"/>
</dbReference>
<dbReference type="InterPro" id="IPR006197">
    <property type="entry name" value="Peptidase_S24_LexA"/>
</dbReference>
<dbReference type="InterPro" id="IPR015927">
    <property type="entry name" value="Peptidase_S24_S26A/B/C"/>
</dbReference>
<dbReference type="InterPro" id="IPR036388">
    <property type="entry name" value="WH-like_DNA-bd_sf"/>
</dbReference>
<dbReference type="InterPro" id="IPR036390">
    <property type="entry name" value="WH_DNA-bd_sf"/>
</dbReference>
<dbReference type="NCBIfam" id="TIGR00498">
    <property type="entry name" value="lexA"/>
    <property type="match status" value="1"/>
</dbReference>
<dbReference type="PANTHER" id="PTHR33516">
    <property type="entry name" value="LEXA REPRESSOR"/>
    <property type="match status" value="1"/>
</dbReference>
<dbReference type="PANTHER" id="PTHR33516:SF2">
    <property type="entry name" value="LEXA REPRESSOR-RELATED"/>
    <property type="match status" value="1"/>
</dbReference>
<dbReference type="Pfam" id="PF01726">
    <property type="entry name" value="LexA_DNA_bind"/>
    <property type="match status" value="1"/>
</dbReference>
<dbReference type="Pfam" id="PF00717">
    <property type="entry name" value="Peptidase_S24"/>
    <property type="match status" value="1"/>
</dbReference>
<dbReference type="PRINTS" id="PR00726">
    <property type="entry name" value="LEXASERPTASE"/>
</dbReference>
<dbReference type="SUPFAM" id="SSF51306">
    <property type="entry name" value="LexA/Signal peptidase"/>
    <property type="match status" value="1"/>
</dbReference>
<dbReference type="SUPFAM" id="SSF46785">
    <property type="entry name" value="Winged helix' DNA-binding domain"/>
    <property type="match status" value="1"/>
</dbReference>
<gene>
    <name evidence="1" type="primary">lexA</name>
    <name type="ordered locus">LSL_0540</name>
</gene>